<organism>
    <name type="scientific">Bos taurus</name>
    <name type="common">Bovine</name>
    <dbReference type="NCBI Taxonomy" id="9913"/>
    <lineage>
        <taxon>Eukaryota</taxon>
        <taxon>Metazoa</taxon>
        <taxon>Chordata</taxon>
        <taxon>Craniata</taxon>
        <taxon>Vertebrata</taxon>
        <taxon>Euteleostomi</taxon>
        <taxon>Mammalia</taxon>
        <taxon>Eutheria</taxon>
        <taxon>Laurasiatheria</taxon>
        <taxon>Artiodactyla</taxon>
        <taxon>Ruminantia</taxon>
        <taxon>Pecora</taxon>
        <taxon>Bovidae</taxon>
        <taxon>Bovinae</taxon>
        <taxon>Bos</taxon>
    </lineage>
</organism>
<feature type="chain" id="PRO_0000338392" description="Calcium/calmodulin-dependent protein kinase II inhibitor 1">
    <location>
        <begin position="1"/>
        <end position="78"/>
    </location>
</feature>
<feature type="region of interest" description="CAMK2 inhibitory domain" evidence="1">
    <location>
        <begin position="41"/>
        <end position="68"/>
    </location>
</feature>
<keyword id="KW-0966">Cell projection</keyword>
<keyword id="KW-0649">Protein kinase inhibitor</keyword>
<keyword id="KW-1185">Reference proteome</keyword>
<keyword id="KW-0770">Synapse</keyword>
<accession>A7MBG3</accession>
<name>CK2N1_BOVIN</name>
<reference key="1">
    <citation type="submission" date="2007-07" db="EMBL/GenBank/DDBJ databases">
        <authorList>
            <consortium name="NIH - Mammalian Gene Collection (MGC) project"/>
        </authorList>
    </citation>
    <scope>NUCLEOTIDE SEQUENCE [LARGE SCALE MRNA]</scope>
    <source>
        <strain>Hereford</strain>
        <tissue>Fetal brain</tissue>
    </source>
</reference>
<protein>
    <recommendedName>
        <fullName>Calcium/calmodulin-dependent protein kinase II inhibitor 1</fullName>
    </recommendedName>
</protein>
<proteinExistence type="inferred from homology"/>
<comment type="function">
    <text evidence="2 3">Potent and specific inhibitor of CaM-kinase II (CAMK2) (By similarity). Plays a role in the maintenance of long-term retrieval-induced memory in response to contextual fear (By similarity). Modulates blood pressure and vascular reactivity via regulation of CAMK2 activity in addition to regulation of left ventricular mass (By similarity). Mediates the NLRP3 inflammasome in cardiomyocytes via acting as an inhibitor of the MAPK14/p38 and MAPK8/JNK pathways, thereby regulating ventricular remodeling and cardiac rhythm post-myocardial infarction (By similarity). Negatively effects insulin sensitivity and promotes lipid formation in adipose tissues independent of CAMK2 signaling (By similarity).</text>
</comment>
<comment type="subunit">
    <text evidence="3">Interacts with CAMK2B; the presence of Ca(2+)/calmodulin increases the interaction but is not essential (By similarity). Interacts with CAMK2A; this interaction requires CAMK2A activation by Ca(2+) (By similarity).</text>
</comment>
<comment type="subcellular location">
    <subcellularLocation>
        <location evidence="2">Synapse</location>
    </subcellularLocation>
    <subcellularLocation>
        <location evidence="3">Cell projection</location>
        <location evidence="3">Dendrite</location>
    </subcellularLocation>
    <subcellularLocation>
        <location evidence="2">Postsynaptic density</location>
    </subcellularLocation>
</comment>
<comment type="similarity">
    <text evidence="4">Belongs to the CAMK2N family.</text>
</comment>
<dbReference type="EMBL" id="BC151544">
    <property type="protein sequence ID" value="AAI51545.1"/>
    <property type="molecule type" value="mRNA"/>
</dbReference>
<dbReference type="RefSeq" id="NP_001107992.1">
    <property type="nucleotide sequence ID" value="NM_001114520.1"/>
</dbReference>
<dbReference type="FunCoup" id="A7MBG3">
    <property type="interactions" value="59"/>
</dbReference>
<dbReference type="STRING" id="9913.ENSBTAP00000012064"/>
<dbReference type="PaxDb" id="9913-ENSBTAP00000012064"/>
<dbReference type="GeneID" id="616227"/>
<dbReference type="KEGG" id="bta:616227"/>
<dbReference type="CTD" id="55450"/>
<dbReference type="VEuPathDB" id="HostDB:ENSBTAG00000009156"/>
<dbReference type="eggNOG" id="ENOG502S6QW">
    <property type="taxonomic scope" value="Eukaryota"/>
</dbReference>
<dbReference type="HOGENOM" id="CLU_197183_0_0_1"/>
<dbReference type="InParanoid" id="A7MBG3"/>
<dbReference type="OMA" id="DENITHY"/>
<dbReference type="OrthoDB" id="9922824at2759"/>
<dbReference type="TreeFam" id="TF333175"/>
<dbReference type="Proteomes" id="UP000009136">
    <property type="component" value="Chromosome 2"/>
</dbReference>
<dbReference type="Bgee" id="ENSBTAG00000009156">
    <property type="expression patterns" value="Expressed in occipital lobe and 99 other cell types or tissues"/>
</dbReference>
<dbReference type="GO" id="GO:0030425">
    <property type="term" value="C:dendrite"/>
    <property type="evidence" value="ECO:0007669"/>
    <property type="project" value="UniProtKB-SubCell"/>
</dbReference>
<dbReference type="GO" id="GO:0014069">
    <property type="term" value="C:postsynaptic density"/>
    <property type="evidence" value="ECO:0007669"/>
    <property type="project" value="UniProtKB-SubCell"/>
</dbReference>
<dbReference type="GO" id="GO:0045202">
    <property type="term" value="C:synapse"/>
    <property type="evidence" value="ECO:0000250"/>
    <property type="project" value="UniProtKB"/>
</dbReference>
<dbReference type="GO" id="GO:0008427">
    <property type="term" value="F:calcium-dependent protein kinase inhibitor activity"/>
    <property type="evidence" value="ECO:0000318"/>
    <property type="project" value="GO_Central"/>
</dbReference>
<dbReference type="GO" id="GO:0019901">
    <property type="term" value="F:protein kinase binding"/>
    <property type="evidence" value="ECO:0000318"/>
    <property type="project" value="GO_Central"/>
</dbReference>
<dbReference type="GO" id="GO:0007616">
    <property type="term" value="P:long-term memory"/>
    <property type="evidence" value="ECO:0000250"/>
    <property type="project" value="UniProtKB"/>
</dbReference>
<dbReference type="GO" id="GO:0050729">
    <property type="term" value="P:positive regulation of inflammatory response"/>
    <property type="evidence" value="ECO:0000250"/>
    <property type="project" value="UniProtKB"/>
</dbReference>
<dbReference type="InterPro" id="IPR026779">
    <property type="entry name" value="Camk2n"/>
</dbReference>
<dbReference type="PANTHER" id="PTHR31007">
    <property type="entry name" value="CALCIUM/CALMODULIN-DEPENDENT PROTEIN KINASE II INHIBITOR 2"/>
    <property type="match status" value="1"/>
</dbReference>
<dbReference type="PANTHER" id="PTHR31007:SF3">
    <property type="entry name" value="CALCIUM_CALMODULIN-DEPENDENT PROTEIN KINASE II INHIBITOR 1"/>
    <property type="match status" value="1"/>
</dbReference>
<dbReference type="Pfam" id="PF15170">
    <property type="entry name" value="CaM-KIIN"/>
    <property type="match status" value="1"/>
</dbReference>
<sequence>MSEVLPYGDEKLSPYGDGGDVGQVFSCRLQDTNNFFGAGQNKRPPKLGQIGRSKRVVIEDDRIDDVLKNMTDKAPPGV</sequence>
<gene>
    <name type="primary">CAMK2N1</name>
</gene>
<evidence type="ECO:0000250" key="1"/>
<evidence type="ECO:0000250" key="2">
    <source>
        <dbReference type="UniProtKB" id="Q6QWF9"/>
    </source>
</evidence>
<evidence type="ECO:0000250" key="3">
    <source>
        <dbReference type="UniProtKB" id="Q9JI15"/>
    </source>
</evidence>
<evidence type="ECO:0000305" key="4"/>